<name>HIS2_LISMO</name>
<feature type="chain" id="PRO_0000136368" description="Phosphoribosyl-ATP pyrophosphatase">
    <location>
        <begin position="1"/>
        <end position="103"/>
    </location>
</feature>
<evidence type="ECO:0000250" key="1"/>
<evidence type="ECO:0000305" key="2"/>
<reference key="1">
    <citation type="journal article" date="2001" name="Science">
        <title>Comparative genomics of Listeria species.</title>
        <authorList>
            <person name="Glaser P."/>
            <person name="Frangeul L."/>
            <person name="Buchrieser C."/>
            <person name="Rusniok C."/>
            <person name="Amend A."/>
            <person name="Baquero F."/>
            <person name="Berche P."/>
            <person name="Bloecker H."/>
            <person name="Brandt P."/>
            <person name="Chakraborty T."/>
            <person name="Charbit A."/>
            <person name="Chetouani F."/>
            <person name="Couve E."/>
            <person name="de Daruvar A."/>
            <person name="Dehoux P."/>
            <person name="Domann E."/>
            <person name="Dominguez-Bernal G."/>
            <person name="Duchaud E."/>
            <person name="Durant L."/>
            <person name="Dussurget O."/>
            <person name="Entian K.-D."/>
            <person name="Fsihi H."/>
            <person name="Garcia-del Portillo F."/>
            <person name="Garrido P."/>
            <person name="Gautier L."/>
            <person name="Goebel W."/>
            <person name="Gomez-Lopez N."/>
            <person name="Hain T."/>
            <person name="Hauf J."/>
            <person name="Jackson D."/>
            <person name="Jones L.-M."/>
            <person name="Kaerst U."/>
            <person name="Kreft J."/>
            <person name="Kuhn M."/>
            <person name="Kunst F."/>
            <person name="Kurapkat G."/>
            <person name="Madueno E."/>
            <person name="Maitournam A."/>
            <person name="Mata Vicente J."/>
            <person name="Ng E."/>
            <person name="Nedjari H."/>
            <person name="Nordsiek G."/>
            <person name="Novella S."/>
            <person name="de Pablos B."/>
            <person name="Perez-Diaz J.-C."/>
            <person name="Purcell R."/>
            <person name="Remmel B."/>
            <person name="Rose M."/>
            <person name="Schlueter T."/>
            <person name="Simoes N."/>
            <person name="Tierrez A."/>
            <person name="Vazquez-Boland J.-A."/>
            <person name="Voss H."/>
            <person name="Wehland J."/>
            <person name="Cossart P."/>
        </authorList>
    </citation>
    <scope>NUCLEOTIDE SEQUENCE [LARGE SCALE GENOMIC DNA]</scope>
    <source>
        <strain>ATCC BAA-679 / EGD-e</strain>
    </source>
</reference>
<dbReference type="EC" id="3.6.1.31"/>
<dbReference type="EMBL" id="AL591975">
    <property type="protein sequence ID" value="CAC98640.1"/>
    <property type="molecule type" value="Genomic_DNA"/>
</dbReference>
<dbReference type="PIR" id="AB1145">
    <property type="entry name" value="AB1145"/>
</dbReference>
<dbReference type="RefSeq" id="NP_464089.1">
    <property type="nucleotide sequence ID" value="NC_003210.1"/>
</dbReference>
<dbReference type="RefSeq" id="WP_003721355.1">
    <property type="nucleotide sequence ID" value="NZ_CP149495.1"/>
</dbReference>
<dbReference type="SMR" id="Q8Y9G7"/>
<dbReference type="STRING" id="169963.gene:17593212"/>
<dbReference type="PaxDb" id="169963-lmo0561"/>
<dbReference type="EnsemblBacteria" id="CAC98640">
    <property type="protein sequence ID" value="CAC98640"/>
    <property type="gene ID" value="CAC98640"/>
</dbReference>
<dbReference type="GeneID" id="984508"/>
<dbReference type="KEGG" id="lmo:lmo0561"/>
<dbReference type="PATRIC" id="fig|169963.11.peg.580"/>
<dbReference type="eggNOG" id="COG0140">
    <property type="taxonomic scope" value="Bacteria"/>
</dbReference>
<dbReference type="HOGENOM" id="CLU_123337_0_0_9"/>
<dbReference type="OrthoDB" id="9795769at2"/>
<dbReference type="PhylomeDB" id="Q8Y9G7"/>
<dbReference type="BioCyc" id="LMON169963:LMO0561-MONOMER"/>
<dbReference type="UniPathway" id="UPA00031">
    <property type="reaction ID" value="UER00007"/>
</dbReference>
<dbReference type="Proteomes" id="UP000000817">
    <property type="component" value="Chromosome"/>
</dbReference>
<dbReference type="GO" id="GO:0005737">
    <property type="term" value="C:cytoplasm"/>
    <property type="evidence" value="ECO:0007669"/>
    <property type="project" value="UniProtKB-SubCell"/>
</dbReference>
<dbReference type="GO" id="GO:0005524">
    <property type="term" value="F:ATP binding"/>
    <property type="evidence" value="ECO:0007669"/>
    <property type="project" value="UniProtKB-KW"/>
</dbReference>
<dbReference type="GO" id="GO:0004636">
    <property type="term" value="F:phosphoribosyl-ATP diphosphatase activity"/>
    <property type="evidence" value="ECO:0007669"/>
    <property type="project" value="UniProtKB-UniRule"/>
</dbReference>
<dbReference type="GO" id="GO:0000105">
    <property type="term" value="P:L-histidine biosynthetic process"/>
    <property type="evidence" value="ECO:0007669"/>
    <property type="project" value="UniProtKB-UniRule"/>
</dbReference>
<dbReference type="CDD" id="cd11534">
    <property type="entry name" value="NTP-PPase_HisIE_like"/>
    <property type="match status" value="1"/>
</dbReference>
<dbReference type="Gene3D" id="1.10.287.1080">
    <property type="entry name" value="MazG-like"/>
    <property type="match status" value="1"/>
</dbReference>
<dbReference type="HAMAP" id="MF_01020">
    <property type="entry name" value="HisE"/>
    <property type="match status" value="1"/>
</dbReference>
<dbReference type="InterPro" id="IPR008179">
    <property type="entry name" value="HisE"/>
</dbReference>
<dbReference type="InterPro" id="IPR021130">
    <property type="entry name" value="PRib-ATP_PPHydrolase-like"/>
</dbReference>
<dbReference type="NCBIfam" id="TIGR03188">
    <property type="entry name" value="histidine_hisI"/>
    <property type="match status" value="1"/>
</dbReference>
<dbReference type="PANTHER" id="PTHR42945">
    <property type="entry name" value="HISTIDINE BIOSYNTHESIS BIFUNCTIONAL PROTEIN"/>
    <property type="match status" value="1"/>
</dbReference>
<dbReference type="PANTHER" id="PTHR42945:SF9">
    <property type="entry name" value="HISTIDINE BIOSYNTHESIS BIFUNCTIONAL PROTEIN HISIE"/>
    <property type="match status" value="1"/>
</dbReference>
<dbReference type="Pfam" id="PF01503">
    <property type="entry name" value="PRA-PH"/>
    <property type="match status" value="1"/>
</dbReference>
<dbReference type="SUPFAM" id="SSF101386">
    <property type="entry name" value="all-alpha NTP pyrophosphatases"/>
    <property type="match status" value="1"/>
</dbReference>
<comment type="catalytic activity">
    <reaction>
        <text>1-(5-phospho-beta-D-ribosyl)-ATP + H2O = 1-(5-phospho-beta-D-ribosyl)-5'-AMP + diphosphate + H(+)</text>
        <dbReference type="Rhea" id="RHEA:22828"/>
        <dbReference type="ChEBI" id="CHEBI:15377"/>
        <dbReference type="ChEBI" id="CHEBI:15378"/>
        <dbReference type="ChEBI" id="CHEBI:33019"/>
        <dbReference type="ChEBI" id="CHEBI:59457"/>
        <dbReference type="ChEBI" id="CHEBI:73183"/>
        <dbReference type="EC" id="3.6.1.31"/>
    </reaction>
</comment>
<comment type="pathway">
    <text>Amino-acid biosynthesis; L-histidine biosynthesis; L-histidine from 5-phospho-alpha-D-ribose 1-diphosphate: step 2/9.</text>
</comment>
<comment type="subcellular location">
    <subcellularLocation>
        <location evidence="1">Cytoplasm</location>
    </subcellularLocation>
</comment>
<comment type="similarity">
    <text evidence="2">Belongs to the PRA-PH family.</text>
</comment>
<gene>
    <name type="primary">hisE</name>
    <name type="ordered locus">lmo0561</name>
</gene>
<protein>
    <recommendedName>
        <fullName>Phosphoribosyl-ATP pyrophosphatase</fullName>
        <shortName>PRA-PH</shortName>
        <ecNumber>3.6.1.31</ecNumber>
    </recommendedName>
</protein>
<sequence>MLNDLYEEIKLRKTQPREGSYTNYLFDKGLDKILKKVGEEATEVVIAAKNDNQELIAEVSDLAYHLLVLLAEKNIPLVAIQTELQKREGKLSTTRDRKEINDL</sequence>
<accession>Q8Y9G7</accession>
<proteinExistence type="inferred from homology"/>
<organism>
    <name type="scientific">Listeria monocytogenes serovar 1/2a (strain ATCC BAA-679 / EGD-e)</name>
    <dbReference type="NCBI Taxonomy" id="169963"/>
    <lineage>
        <taxon>Bacteria</taxon>
        <taxon>Bacillati</taxon>
        <taxon>Bacillota</taxon>
        <taxon>Bacilli</taxon>
        <taxon>Bacillales</taxon>
        <taxon>Listeriaceae</taxon>
        <taxon>Listeria</taxon>
    </lineage>
</organism>
<keyword id="KW-0028">Amino-acid biosynthesis</keyword>
<keyword id="KW-0067">ATP-binding</keyword>
<keyword id="KW-0963">Cytoplasm</keyword>
<keyword id="KW-0368">Histidine biosynthesis</keyword>
<keyword id="KW-0378">Hydrolase</keyword>
<keyword id="KW-0547">Nucleotide-binding</keyword>
<keyword id="KW-1185">Reference proteome</keyword>